<name>PB2_I82A3</name>
<sequence length="759" mass="85922">MERIKELRDLMSQSRTREILTKTTVDHMAIIKKYTSGRQEKNPALRMKWMMAMKYPITADKRIMEMIPKRNEQGQTLWSNTNDAGSDRVMVSPLAVTWWNRNGPTTSTVHYPKVYKTYFEKVERLKHGTFGPVHFRNQVKIRRRVDINPGHADLSAKEAQDVIMEVVFPNEVGARILTSESQLTITKEKKEELQDCKIAPLMVAYMLERELVRKTRFLPVAGGTSSVYIEVLHLTQGTCWEQMYTPGGEVRNDDVDQSLIIAARNIVRRATVSADPLASLLEMCHSTQIGGIRMVDILRQNPTEEQAVDICKAAMGLRISSSFSFGGFTFKRTSGSSVEREEEVLTGNLQTLKIRVHEGYEEFTMVGRRATAILRKATRRLIQLIVSGRDEQSIAEAIIVAMVFSQEDCMIKAVRGDLNFVNRANQRLNPMHQLLRHFQKDAKVLFQNWGIEPIDNVMGMIGILPDMTPSTEMSLRGIRVSKMGVDEYSSTERVVVSIDRFLRVRDQRGNVLLSPEEVSETQGTEKLTITYSSSMMWEINGPESVLVNTYQWIIRNWETVKIQWSQDPTMLYNKMEFEPFQSLIPKAARGQYSGFVRTLFQQMRDVLGTFDTVQIIKLLPFAAAPPEQSRMQFSSLTVNVRGSGMRILVRGNSPVFNYNKATKRLTVLGKDAGALTEDPDEGTAGVESAVLRGFLILGKEDKRYGPALSINELSNLAKGEKANVLIGQGDVVLVMKRKRDSSILTDSQTATKRIRMAIN</sequence>
<organismHost>
    <name type="scientific">Aves</name>
    <dbReference type="NCBI Taxonomy" id="8782"/>
</organismHost>
<organismHost>
    <name type="scientific">Phocidae</name>
    <name type="common">true seals</name>
    <dbReference type="NCBI Taxonomy" id="9709"/>
</organismHost>
<comment type="function">
    <text evidence="1">Plays an essential role in transcription initiation and cap-stealing mechanism, in which cellular capped pre-mRNAs are used to generate primers for viral transcription. Recognizes and binds the 7-methylguanosine-containing cap of the target pre-RNA which is subsequently cleaved after 10-13 nucleotides by the viral protein PA. Plays a role in the initiation of the viral genome replication and modulates the activity of the ribonucleoprotein (RNP) complex.</text>
</comment>
<comment type="subunit">
    <text evidence="1">Influenza RNA polymerase is composed of three subunits: PB1, PB2 and PA. Interacts (via N-terminus) with PB1 (via C-terminus). Interacts with nucleoprotein NP (via N-terminus).</text>
</comment>
<comment type="subcellular location">
    <subcellularLocation>
        <location evidence="1">Virion</location>
    </subcellularLocation>
    <subcellularLocation>
        <location evidence="1">Host nucleus</location>
    </subcellularLocation>
</comment>
<comment type="similarity">
    <text evidence="1">Belongs to the influenza viruses PB2 family.</text>
</comment>
<gene>
    <name evidence="1" type="primary">PB2</name>
</gene>
<dbReference type="EMBL" id="M73522">
    <property type="protein sequence ID" value="AAA43135.1"/>
    <property type="molecule type" value="Genomic_RNA"/>
</dbReference>
<dbReference type="SMR" id="P26110"/>
<dbReference type="GO" id="GO:0042025">
    <property type="term" value="C:host cell nucleus"/>
    <property type="evidence" value="ECO:0007669"/>
    <property type="project" value="UniProtKB-SubCell"/>
</dbReference>
<dbReference type="GO" id="GO:0044423">
    <property type="term" value="C:virion component"/>
    <property type="evidence" value="ECO:0007669"/>
    <property type="project" value="UniProtKB-UniRule"/>
</dbReference>
<dbReference type="GO" id="GO:0003723">
    <property type="term" value="F:RNA binding"/>
    <property type="evidence" value="ECO:0007669"/>
    <property type="project" value="UniProtKB-UniRule"/>
</dbReference>
<dbReference type="GO" id="GO:0003968">
    <property type="term" value="F:RNA-directed RNA polymerase activity"/>
    <property type="evidence" value="ECO:0007669"/>
    <property type="project" value="UniProtKB-UniRule"/>
</dbReference>
<dbReference type="GO" id="GO:0006370">
    <property type="term" value="P:7-methylguanosine mRNA capping"/>
    <property type="evidence" value="ECO:0007669"/>
    <property type="project" value="UniProtKB-UniRule"/>
</dbReference>
<dbReference type="GO" id="GO:0075526">
    <property type="term" value="P:cap snatching"/>
    <property type="evidence" value="ECO:0007669"/>
    <property type="project" value="UniProtKB-UniRule"/>
</dbReference>
<dbReference type="GO" id="GO:0006351">
    <property type="term" value="P:DNA-templated transcription"/>
    <property type="evidence" value="ECO:0007669"/>
    <property type="project" value="UniProtKB-UniRule"/>
</dbReference>
<dbReference type="GO" id="GO:0039657">
    <property type="term" value="P:symbiont-mediated suppression of host gene expression"/>
    <property type="evidence" value="ECO:0007669"/>
    <property type="project" value="UniProtKB-KW"/>
</dbReference>
<dbReference type="GO" id="GO:0039523">
    <property type="term" value="P:symbiont-mediated suppression of host mRNA transcription via inhibition of RNA polymerase II activity"/>
    <property type="evidence" value="ECO:0007669"/>
    <property type="project" value="UniProtKB-UniRule"/>
</dbReference>
<dbReference type="GO" id="GO:0039694">
    <property type="term" value="P:viral RNA genome replication"/>
    <property type="evidence" value="ECO:0007669"/>
    <property type="project" value="InterPro"/>
</dbReference>
<dbReference type="FunFam" id="3.30.30.90:FF:000001">
    <property type="entry name" value="Polymerase basic protein 2"/>
    <property type="match status" value="1"/>
</dbReference>
<dbReference type="Gene3D" id="3.30.30.90">
    <property type="entry name" value="Polymerase Basic Protein 2, C-terminal domain"/>
    <property type="match status" value="1"/>
</dbReference>
<dbReference type="HAMAP" id="MF_04062">
    <property type="entry name" value="INV_PB2"/>
    <property type="match status" value="1"/>
</dbReference>
<dbReference type="InterPro" id="IPR049110">
    <property type="entry name" value="Flu_PB2_2nd"/>
</dbReference>
<dbReference type="InterPro" id="IPR049114">
    <property type="entry name" value="Flu_PB2_6th"/>
</dbReference>
<dbReference type="InterPro" id="IPR049115">
    <property type="entry name" value="Flu_PB2_C"/>
</dbReference>
<dbReference type="InterPro" id="IPR048298">
    <property type="entry name" value="Flu_PB2_CAP-bd"/>
</dbReference>
<dbReference type="InterPro" id="IPR049111">
    <property type="entry name" value="Flu_PB2_middle"/>
</dbReference>
<dbReference type="InterPro" id="IPR049106">
    <property type="entry name" value="Flu_PB2_N"/>
</dbReference>
<dbReference type="InterPro" id="IPR001591">
    <property type="entry name" value="INV_PB2"/>
</dbReference>
<dbReference type="InterPro" id="IPR049113">
    <property type="entry name" value="PB2_helical"/>
</dbReference>
<dbReference type="InterPro" id="IPR037258">
    <property type="entry name" value="PDB2_C"/>
</dbReference>
<dbReference type="Pfam" id="PF20947">
    <property type="entry name" value="Flu_PB2_1st"/>
    <property type="match status" value="1"/>
</dbReference>
<dbReference type="Pfam" id="PF20948">
    <property type="entry name" value="Flu_PB2_2nd"/>
    <property type="match status" value="1"/>
</dbReference>
<dbReference type="Pfam" id="PF20949">
    <property type="entry name" value="Flu_PB2_3rd"/>
    <property type="match status" value="1"/>
</dbReference>
<dbReference type="Pfam" id="PF20950">
    <property type="entry name" value="Flu_PB2_4th"/>
    <property type="match status" value="1"/>
</dbReference>
<dbReference type="Pfam" id="PF00604">
    <property type="entry name" value="Flu_PB2_5th"/>
    <property type="match status" value="1"/>
</dbReference>
<dbReference type="Pfam" id="PF20951">
    <property type="entry name" value="Flu_PB2_6th"/>
    <property type="match status" value="1"/>
</dbReference>
<dbReference type="Pfam" id="PF20952">
    <property type="entry name" value="Flu_PB2_7th"/>
    <property type="match status" value="1"/>
</dbReference>
<dbReference type="SUPFAM" id="SSF160453">
    <property type="entry name" value="PB2 C-terminal domain-like"/>
    <property type="match status" value="1"/>
</dbReference>
<evidence type="ECO:0000255" key="1">
    <source>
        <dbReference type="HAMAP-Rule" id="MF_04062"/>
    </source>
</evidence>
<proteinExistence type="inferred from homology"/>
<reference key="1">
    <citation type="journal article" date="1990" name="J. Virol.">
        <title>Evolution of influenza A virus PB2 genes: implications for evolution of the ribonucleoprotein complex and origin of human influenza A virus.</title>
        <authorList>
            <person name="Gorman O.T."/>
            <person name="Donis R.O."/>
            <person name="Kawaoka Y."/>
            <person name="Webster R.G."/>
        </authorList>
    </citation>
    <scope>NUCLEOTIDE SEQUENCE [GENOMIC RNA]</scope>
</reference>
<organism>
    <name type="scientific">Influenza A virus (strain A/Seal/Massachusetts/133/1982 H4N5)</name>
    <dbReference type="NCBI Taxonomy" id="387250"/>
    <lineage>
        <taxon>Viruses</taxon>
        <taxon>Riboviria</taxon>
        <taxon>Orthornavirae</taxon>
        <taxon>Negarnaviricota</taxon>
        <taxon>Polyploviricotina</taxon>
        <taxon>Insthoviricetes</taxon>
        <taxon>Articulavirales</taxon>
        <taxon>Orthomyxoviridae</taxon>
        <taxon>Alphainfluenzavirus</taxon>
        <taxon>Alphainfluenzavirus influenzae</taxon>
        <taxon>Influenza A virus</taxon>
    </lineage>
</organism>
<accession>P26110</accession>
<feature type="chain" id="PRO_0000078836" description="Polymerase basic protein 2">
    <location>
        <begin position="1"/>
        <end position="759"/>
    </location>
</feature>
<feature type="short sequence motif" description="Nuclear localization signal" evidence="1">
    <location>
        <begin position="736"/>
        <end position="739"/>
    </location>
</feature>
<feature type="site" description="Avian adaptation" evidence="1">
    <location>
        <position position="627"/>
    </location>
</feature>
<protein>
    <recommendedName>
        <fullName evidence="1">Polymerase basic protein 2</fullName>
    </recommendedName>
    <alternativeName>
        <fullName evidence="1">RNA-directed RNA polymerase subunit P3</fullName>
    </alternativeName>
</protein>
<keyword id="KW-1157">Cap snatching</keyword>
<keyword id="KW-1262">Eukaryotic host gene expression shutoff by virus</keyword>
<keyword id="KW-1191">Eukaryotic host transcription shutoff by virus</keyword>
<keyword id="KW-1190">Host gene expression shutoff by virus</keyword>
<keyword id="KW-1048">Host nucleus</keyword>
<keyword id="KW-0945">Host-virus interaction</keyword>
<keyword id="KW-1104">Inhibition of host RNA polymerase II by virus</keyword>
<keyword id="KW-0506">mRNA capping</keyword>
<keyword id="KW-0507">mRNA processing</keyword>
<keyword id="KW-1195">Viral transcription</keyword>
<keyword id="KW-0946">Virion</keyword>